<comment type="interaction">
    <interactant intactId="EBI-8468186">
        <id>Q8IZU1</id>
    </interactant>
    <interactant intactId="EBI-351829">
        <id>O15145</id>
        <label>ARPC3</label>
    </interactant>
    <organismsDiffer>false</organismsDiffer>
    <experiments>3</experiments>
</comment>
<comment type="interaction">
    <interactant intactId="EBI-8468186">
        <id>Q8IZU1</id>
    </interactant>
    <interactant intactId="EBI-718729">
        <id>P55212</id>
        <label>CASP6</label>
    </interactant>
    <organismsDiffer>false</organismsDiffer>
    <experiments>3</experiments>
</comment>
<comment type="interaction">
    <interactant intactId="EBI-8468186">
        <id>Q8IZU1</id>
    </interactant>
    <interactant intactId="EBI-25837549">
        <id>P28329-3</id>
        <label>CHAT</label>
    </interactant>
    <organismsDiffer>false</organismsDiffer>
    <experiments>3</experiments>
</comment>
<comment type="interaction">
    <interactant intactId="EBI-8468186">
        <id>Q8IZU1</id>
    </interactant>
    <interactant intactId="EBI-11962928">
        <id>Q9UI47-2</id>
        <label>CTNNA3</label>
    </interactant>
    <organismsDiffer>false</organismsDiffer>
    <experiments>3</experiments>
</comment>
<comment type="interaction">
    <interactant intactId="EBI-8468186">
        <id>Q8IZU1</id>
    </interactant>
    <interactant intactId="EBI-446479">
        <id>P99999</id>
        <label>CYCS</label>
    </interactant>
    <organismsDiffer>false</organismsDiffer>
    <experiments>3</experiments>
</comment>
<comment type="interaction">
    <interactant intactId="EBI-8468186">
        <id>Q8IZU1</id>
    </interactant>
    <interactant intactId="EBI-10976677">
        <id>G5E9A7</id>
        <label>DMWD</label>
    </interactant>
    <organismsDiffer>false</organismsDiffer>
    <experiments>3</experiments>
</comment>
<comment type="interaction">
    <interactant intactId="EBI-8468186">
        <id>Q8IZU1</id>
    </interactant>
    <interactant intactId="EBI-750300">
        <id>Q01658</id>
        <label>DR1</label>
    </interactant>
    <organismsDiffer>false</organismsDiffer>
    <experiments>3</experiments>
</comment>
<comment type="interaction">
    <interactant intactId="EBI-8468186">
        <id>Q8IZU1</id>
    </interactant>
    <interactant intactId="EBI-372412">
        <id>P11474</id>
        <label>ESRRA</label>
    </interactant>
    <organismsDiffer>false</organismsDiffer>
    <experiments>3</experiments>
</comment>
<comment type="interaction">
    <interactant intactId="EBI-8468186">
        <id>Q8IZU1</id>
    </interactant>
    <interactant intactId="EBI-12001340">
        <id>P62508-3</id>
        <label>ESRRG</label>
    </interactant>
    <organismsDiffer>false</organismsDiffer>
    <experiments>3</experiments>
</comment>
<comment type="interaction">
    <interactant intactId="EBI-8468186">
        <id>Q8IZU1</id>
    </interactant>
    <interactant intactId="EBI-10175124">
        <id>Q8IZU0</id>
        <label>FAM9B</label>
    </interactant>
    <organismsDiffer>false</organismsDiffer>
    <experiments>5</experiments>
</comment>
<comment type="interaction">
    <interactant intactId="EBI-8468186">
        <id>Q8IZU1</id>
    </interactant>
    <interactant intactId="EBI-348399">
        <id>P22607</id>
        <label>FGFR3</label>
    </interactant>
    <organismsDiffer>false</organismsDiffer>
    <experiments>3</experiments>
</comment>
<comment type="interaction">
    <interactant intactId="EBI-8468186">
        <id>Q8IZU1</id>
    </interactant>
    <interactant intactId="EBI-1955541">
        <id>Q53GS7</id>
        <label>GLE1</label>
    </interactant>
    <organismsDiffer>false</organismsDiffer>
    <experiments>3</experiments>
</comment>
<comment type="interaction">
    <interactant intactId="EBI-8468186">
        <id>Q8IZU1</id>
    </interactant>
    <interactant intactId="EBI-747754">
        <id>P28799</id>
        <label>GRN</label>
    </interactant>
    <organismsDiffer>false</organismsDiffer>
    <experiments>3</experiments>
</comment>
<comment type="interaction">
    <interactant intactId="EBI-8468186">
        <id>Q8IZU1</id>
    </interactant>
    <interactant intactId="EBI-389564">
        <id>Q00403</id>
        <label>GTF2B</label>
    </interactant>
    <organismsDiffer>false</organismsDiffer>
    <experiments>3</experiments>
</comment>
<comment type="interaction">
    <interactant intactId="EBI-8468186">
        <id>Q8IZU1</id>
    </interactant>
    <interactant intactId="EBI-12142839">
        <id>U3KQK0</id>
        <label>H2BC15</label>
    </interactant>
    <organismsDiffer>false</organismsDiffer>
    <experiments>3</experiments>
</comment>
<comment type="interaction">
    <interactant intactId="EBI-8468186">
        <id>Q8IZU1</id>
    </interactant>
    <interactant intactId="EBI-473886">
        <id>O00291</id>
        <label>HIP1</label>
    </interactant>
    <organismsDiffer>false</organismsDiffer>
    <experiments>3</experiments>
</comment>
<comment type="interaction">
    <interactant intactId="EBI-8468186">
        <id>Q8IZU1</id>
    </interactant>
    <interactant intactId="EBI-746815">
        <id>Q86YM7</id>
        <label>HOMER1</label>
    </interactant>
    <organismsDiffer>false</organismsDiffer>
    <experiments>3</experiments>
</comment>
<comment type="interaction">
    <interactant intactId="EBI-8468186">
        <id>Q8IZU1</id>
    </interactant>
    <interactant intactId="EBI-350145">
        <id>P01112</id>
        <label>HRAS</label>
    </interactant>
    <organismsDiffer>false</organismsDiffer>
    <experiments>3</experiments>
</comment>
<comment type="interaction">
    <interactant intactId="EBI-8468186">
        <id>Q8IZU1</id>
    </interactant>
    <interactant intactId="EBI-352682">
        <id>P04792</id>
        <label>HSPB1</label>
    </interactant>
    <organismsDiffer>false</organismsDiffer>
    <experiments>3</experiments>
</comment>
<comment type="interaction">
    <interactant intactId="EBI-8468186">
        <id>Q8IZU1</id>
    </interactant>
    <interactant intactId="EBI-466029">
        <id>P42858</id>
        <label>HTT</label>
    </interactant>
    <organismsDiffer>false</organismsDiffer>
    <experiments>18</experiments>
</comment>
<comment type="interaction">
    <interactant intactId="EBI-8468186">
        <id>Q8IZU1</id>
    </interactant>
    <interactant intactId="EBI-1049156">
        <id>Q96CB8</id>
        <label>INTS12</label>
    </interactant>
    <organismsDiffer>false</organismsDiffer>
    <experiments>3</experiments>
</comment>
<comment type="interaction">
    <interactant intactId="EBI-8468186">
        <id>Q8IZU1</id>
    </interactant>
    <interactant intactId="EBI-710124">
        <id>O60341</id>
        <label>KDM1A</label>
    </interactant>
    <organismsDiffer>false</organismsDiffer>
    <experiments>2</experiments>
</comment>
<comment type="interaction">
    <interactant intactId="EBI-8468186">
        <id>Q8IZU1</id>
    </interactant>
    <interactant intactId="EBI-10975473">
        <id>O60333-2</id>
        <label>KIF1B</label>
    </interactant>
    <organismsDiffer>false</organismsDiffer>
    <experiments>3</experiments>
</comment>
<comment type="interaction">
    <interactant intactId="EBI-8468186">
        <id>Q8IZU1</id>
    </interactant>
    <interactant intactId="EBI-21591415">
        <id>P13473-2</id>
        <label>LAMP2</label>
    </interactant>
    <organismsDiffer>false</organismsDiffer>
    <experiments>3</experiments>
</comment>
<comment type="interaction">
    <interactant intactId="EBI-8468186">
        <id>Q8IZU1</id>
    </interactant>
    <interactant intactId="EBI-11955335">
        <id>Q5T753</id>
        <label>LCE1E</label>
    </interactant>
    <organismsDiffer>false</organismsDiffer>
    <experiments>3</experiments>
</comment>
<comment type="interaction">
    <interactant intactId="EBI-8468186">
        <id>Q8IZU1</id>
    </interactant>
    <interactant intactId="EBI-351935">
        <id>P02545</id>
        <label>LMNA</label>
    </interactant>
    <organismsDiffer>false</organismsDiffer>
    <experiments>3</experiments>
</comment>
<comment type="interaction">
    <interactant intactId="EBI-8468186">
        <id>Q8IZU1</id>
    </interactant>
    <interactant intactId="EBI-348259">
        <id>Q96EZ8</id>
        <label>MCRS1</label>
    </interactant>
    <organismsDiffer>false</organismsDiffer>
    <experiments>3</experiments>
</comment>
<comment type="interaction">
    <interactant intactId="EBI-8468186">
        <id>Q8IZU1</id>
    </interactant>
    <interactant intactId="EBI-716132">
        <id>P42568</id>
        <label>MLLT3</label>
    </interactant>
    <organismsDiffer>false</organismsDiffer>
    <experiments>5</experiments>
</comment>
<comment type="interaction">
    <interactant intactId="EBI-8468186">
        <id>Q8IZU1</id>
    </interactant>
    <interactant intactId="EBI-8641936">
        <id>Q15742</id>
        <label>NAB2</label>
    </interactant>
    <organismsDiffer>false</organismsDiffer>
    <experiments>3</experiments>
</comment>
<comment type="interaction">
    <interactant intactId="EBI-8468186">
        <id>Q8IZU1</id>
    </interactant>
    <interactant intactId="EBI-748312">
        <id>P49821</id>
        <label>NDUFV1</label>
    </interactant>
    <organismsDiffer>false</organismsDiffer>
    <experiments>3</experiments>
</comment>
<comment type="interaction">
    <interactant intactId="EBI-8468186">
        <id>Q8IZU1</id>
    </interactant>
    <interactant intactId="EBI-475646">
        <id>P07196</id>
        <label>NEFL</label>
    </interactant>
    <organismsDiffer>false</organismsDiffer>
    <experiments>3</experiments>
</comment>
<comment type="interaction">
    <interactant intactId="EBI-8468186">
        <id>Q8IZU1</id>
    </interactant>
    <interactant intactId="EBI-1014472">
        <id>P35240</id>
        <label>NF2</label>
    </interactant>
    <organismsDiffer>false</organismsDiffer>
    <experiments>3</experiments>
</comment>
<comment type="interaction">
    <interactant intactId="EBI-8468186">
        <id>Q8IZU1</id>
    </interactant>
    <interactant intactId="EBI-1014514">
        <id>P35240-4</id>
        <label>NF2</label>
    </interactant>
    <organismsDiffer>false</organismsDiffer>
    <experiments>3</experiments>
</comment>
<comment type="interaction">
    <interactant intactId="EBI-8468186">
        <id>Q8IZU1</id>
    </interactant>
    <interactant intactId="EBI-398874">
        <id>Q9UBU9</id>
        <label>NXF1</label>
    </interactant>
    <organismsDiffer>false</organismsDiffer>
    <experiments>3</experiments>
</comment>
<comment type="interaction">
    <interactant intactId="EBI-8468186">
        <id>Q8IZU1</id>
    </interactant>
    <interactant intactId="EBI-725403">
        <id>P78364</id>
        <label>PHC1</label>
    </interactant>
    <organismsDiffer>false</organismsDiffer>
    <experiments>3</experiments>
</comment>
<comment type="interaction">
    <interactant intactId="EBI-8468186">
        <id>Q8IZU1</id>
    </interactant>
    <interactant intactId="EBI-79165">
        <id>Q9NRD5</id>
        <label>PICK1</label>
    </interactant>
    <organismsDiffer>false</organismsDiffer>
    <experiments>3</experiments>
</comment>
<comment type="interaction">
    <interactant intactId="EBI-8468186">
        <id>Q8IZU1</id>
    </interactant>
    <interactant intactId="EBI-78738">
        <id>Q99873</id>
        <label>PRMT1</label>
    </interactant>
    <organismsDiffer>false</organismsDiffer>
    <experiments>2</experiments>
</comment>
<comment type="interaction">
    <interactant intactId="EBI-8468186">
        <id>Q8IZU1</id>
    </interactant>
    <interactant intactId="EBI-5280197">
        <id>O75400-2</id>
        <label>PRPF40A</label>
    </interactant>
    <organismsDiffer>false</organismsDiffer>
    <experiments>3</experiments>
</comment>
<comment type="interaction">
    <interactant intactId="EBI-8468186">
        <id>Q8IZU1</id>
    </interactant>
    <interactant intactId="EBI-12754095">
        <id>P86480</id>
        <label>PRR20D</label>
    </interactant>
    <organismsDiffer>false</organismsDiffer>
    <experiments>3</experiments>
</comment>
<comment type="interaction">
    <interactant intactId="EBI-8468186">
        <id>Q8IZU1</id>
    </interactant>
    <interactant intactId="EBI-286642">
        <id>P62826</id>
        <label>RAN</label>
    </interactant>
    <organismsDiffer>false</organismsDiffer>
    <experiments>3</experiments>
</comment>
<comment type="interaction">
    <interactant intactId="EBI-8468186">
        <id>Q8IZU1</id>
    </interactant>
    <interactant intactId="EBI-12002474">
        <id>Q2KHN1</id>
        <label>RNF151</label>
    </interactant>
    <organismsDiffer>false</organismsDiffer>
    <experiments>3</experiments>
</comment>
<comment type="interaction">
    <interactant intactId="EBI-8468186">
        <id>Q8IZU1</id>
    </interactant>
    <interactant intactId="EBI-2340927">
        <id>P78317</id>
        <label>RNF4</label>
    </interactant>
    <organismsDiffer>false</organismsDiffer>
    <experiments>3</experiments>
</comment>
<comment type="interaction">
    <interactant intactId="EBI-8468186">
        <id>Q8IZU1</id>
    </interactant>
    <interactant intactId="EBI-11984663">
        <id>Q06455-2</id>
        <label>RUNX1T1</label>
    </interactant>
    <organismsDiffer>false</organismsDiffer>
    <experiments>3</experiments>
</comment>
<comment type="interaction">
    <interactant intactId="EBI-8468186">
        <id>Q8IZU1</id>
    </interactant>
    <interactant intactId="EBI-727004">
        <id>O00560</id>
        <label>SDCBP</label>
    </interactant>
    <organismsDiffer>false</organismsDiffer>
    <experiments>3</experiments>
</comment>
<comment type="interaction">
    <interactant intactId="EBI-8468186">
        <id>Q8IZU1</id>
    </interactant>
    <interactant intactId="EBI-2623095">
        <id>Q9Y371</id>
        <label>SH3GLB1</label>
    </interactant>
    <organismsDiffer>false</organismsDiffer>
    <experiments>3</experiments>
</comment>
<comment type="interaction">
    <interactant intactId="EBI-8468186">
        <id>Q8IZU1</id>
    </interactant>
    <interactant intactId="EBI-5235340">
        <id>Q7Z699</id>
        <label>SPRED1</label>
    </interactant>
    <organismsDiffer>false</organismsDiffer>
    <experiments>3</experiments>
</comment>
<comment type="interaction">
    <interactant intactId="EBI-8468186">
        <id>Q8IZU1</id>
    </interactant>
    <interactant intactId="EBI-745680">
        <id>Q96MF2</id>
        <label>STAC3</label>
    </interactant>
    <organismsDiffer>false</organismsDiffer>
    <experiments>3</experiments>
</comment>
<comment type="interaction">
    <interactant intactId="EBI-8468186">
        <id>Q8IZU1</id>
    </interactant>
    <interactant intactId="EBI-1054052">
        <id>P31948</id>
        <label>STIP1</label>
    </interactant>
    <organismsDiffer>false</organismsDiffer>
    <experiments>3</experiments>
</comment>
<comment type="interaction">
    <interactant intactId="EBI-8468186">
        <id>Q8IZU1</id>
    </interactant>
    <interactant intactId="EBI-372899">
        <id>Q13148</id>
        <label>TARDBP</label>
    </interactant>
    <organismsDiffer>false</organismsDiffer>
    <experiments>6</experiments>
</comment>
<comment type="interaction">
    <interactant intactId="EBI-8468186">
        <id>Q8IZU1</id>
    </interactant>
    <interactant intactId="EBI-741515">
        <id>Q9NVV9</id>
        <label>THAP1</label>
    </interactant>
    <organismsDiffer>false</organismsDiffer>
    <experiments>3</experiments>
</comment>
<comment type="interaction">
    <interactant intactId="EBI-8468186">
        <id>Q8IZU1</id>
    </interactant>
    <interactant intactId="EBI-355744">
        <id>Q12933</id>
        <label>TRAF2</label>
    </interactant>
    <organismsDiffer>false</organismsDiffer>
    <experiments>3</experiments>
</comment>
<comment type="interaction">
    <interactant intactId="EBI-8468186">
        <id>Q8IZU1</id>
    </interactant>
    <interactant intactId="EBI-523498">
        <id>O00463</id>
        <label>TRAF5</label>
    </interactant>
    <organismsDiffer>false</organismsDiffer>
    <experiments>3</experiments>
</comment>
<comment type="interaction">
    <interactant intactId="EBI-8468186">
        <id>Q8IZU1</id>
    </interactant>
    <interactant intactId="EBI-725997">
        <id>Q8WV44</id>
        <label>TRIM41</label>
    </interactant>
    <organismsDiffer>false</organismsDiffer>
    <experiments>3</experiments>
</comment>
<comment type="interaction">
    <interactant intactId="EBI-8468186">
        <id>Q8IZU1</id>
    </interactant>
    <interactant intactId="EBI-359793">
        <id>P40222</id>
        <label>TXLNA</label>
    </interactant>
    <organismsDiffer>false</organismsDiffer>
    <experiments>3</experiments>
</comment>
<comment type="interaction">
    <interactant intactId="EBI-8468186">
        <id>Q8IZU1</id>
    </interactant>
    <interactant intactId="EBI-720609">
        <id>O76024</id>
        <label>WFS1</label>
    </interactant>
    <organismsDiffer>false</organismsDiffer>
    <experiments>3</experiments>
</comment>
<comment type="interaction">
    <interactant intactId="EBI-8468186">
        <id>Q8IZU1</id>
    </interactant>
    <interactant intactId="EBI-7227791">
        <id>Q15916</id>
        <label>ZBTB6</label>
    </interactant>
    <organismsDiffer>false</organismsDiffer>
    <experiments>3</experiments>
</comment>
<comment type="interaction">
    <interactant intactId="EBI-8468186">
        <id>Q8IZU1</id>
    </interactant>
    <interactant intactId="EBI-1052613">
        <id>Q96JP5</id>
        <label>ZFP91</label>
    </interactant>
    <organismsDiffer>false</organismsDiffer>
    <experiments>3</experiments>
</comment>
<comment type="interaction">
    <interactant intactId="EBI-8468186">
        <id>Q8IZU1</id>
    </interactant>
    <interactant intactId="EBI-7149881">
        <id>Q96BV0</id>
        <label>ZNF775</label>
    </interactant>
    <organismsDiffer>false</organismsDiffer>
    <experiments>3</experiments>
</comment>
<comment type="subcellular location">
    <subcellularLocation>
        <location evidence="2">Nucleus</location>
        <location evidence="2">Nucleolus</location>
    </subcellularLocation>
</comment>
<comment type="tissue specificity">
    <text evidence="2">Expressed exclusively in testis.</text>
</comment>
<comment type="similarity">
    <text evidence="3">Belongs to the XLR/SYCP3 family.</text>
</comment>
<gene>
    <name evidence="4" type="primary">FAM9A</name>
    <name evidence="4" type="synonym">TEX39A</name>
</gene>
<accession>Q8IZU1</accession>
<accession>B7ZLH5</accession>
<accession>Q2M2D1</accession>
<keyword id="KW-0539">Nucleus</keyword>
<keyword id="KW-1267">Proteomics identification</keyword>
<keyword id="KW-1185">Reference proteome</keyword>
<reference key="1">
    <citation type="journal article" date="2002" name="Genomics">
        <title>A new gene family (FAM9) of low-copy repeats in Xp22.3 expressed exclusively in testis: implications for recombinations in this region.</title>
        <authorList>
            <person name="Martinez-Garay I."/>
            <person name="Jablonka S."/>
            <person name="Sutajova M."/>
            <person name="Steuernagel P."/>
            <person name="Gal A."/>
            <person name="Kutsche K."/>
        </authorList>
    </citation>
    <scope>NUCLEOTIDE SEQUENCE [MRNA]</scope>
    <scope>TISSUE SPECIFICITY</scope>
    <scope>SUBCELLULAR LOCATION</scope>
</reference>
<reference key="2">
    <citation type="journal article" date="2004" name="Genome Res.">
        <title>The status, quality, and expansion of the NIH full-length cDNA project: the Mammalian Gene Collection (MGC).</title>
        <authorList>
            <consortium name="The MGC Project Team"/>
        </authorList>
    </citation>
    <scope>NUCLEOTIDE SEQUENCE [LARGE SCALE MRNA]</scope>
</reference>
<dbReference type="EMBL" id="AF494343">
    <property type="protein sequence ID" value="AAN07162.1"/>
    <property type="molecule type" value="mRNA"/>
</dbReference>
<dbReference type="EMBL" id="BC112022">
    <property type="protein sequence ID" value="AAI12023.1"/>
    <property type="molecule type" value="mRNA"/>
</dbReference>
<dbReference type="EMBL" id="BC113449">
    <property type="protein sequence ID" value="AAI13450.1"/>
    <property type="molecule type" value="mRNA"/>
</dbReference>
<dbReference type="EMBL" id="BC143805">
    <property type="protein sequence ID" value="AAI43806.1"/>
    <property type="molecule type" value="mRNA"/>
</dbReference>
<dbReference type="CCDS" id="CCDS14131.1"/>
<dbReference type="RefSeq" id="NP_001164657.1">
    <property type="nucleotide sequence ID" value="NM_001171186.1"/>
</dbReference>
<dbReference type="RefSeq" id="NP_777611.1">
    <property type="nucleotide sequence ID" value="NM_174951.3"/>
</dbReference>
<dbReference type="BioGRID" id="128130">
    <property type="interactions" value="87"/>
</dbReference>
<dbReference type="FunCoup" id="Q8IZU1">
    <property type="interactions" value="15"/>
</dbReference>
<dbReference type="IntAct" id="Q8IZU1">
    <property type="interactions" value="73"/>
</dbReference>
<dbReference type="MINT" id="Q8IZU1"/>
<dbReference type="STRING" id="9606.ENSP00000440163"/>
<dbReference type="BioMuta" id="FAM9A"/>
<dbReference type="DMDM" id="29336759"/>
<dbReference type="jPOST" id="Q8IZU1"/>
<dbReference type="MassIVE" id="Q8IZU1"/>
<dbReference type="PaxDb" id="9606-ENSP00000440163"/>
<dbReference type="PeptideAtlas" id="Q8IZU1"/>
<dbReference type="Antibodypedia" id="52846">
    <property type="antibodies" value="6 antibodies from 6 providers"/>
</dbReference>
<dbReference type="DNASU" id="171482"/>
<dbReference type="Ensembl" id="ENST00000381003.7">
    <property type="protein sequence ID" value="ENSP00000370391.3"/>
    <property type="gene ID" value="ENSG00000183304.10"/>
</dbReference>
<dbReference type="Ensembl" id="ENST00000543214.1">
    <property type="protein sequence ID" value="ENSP00000440163.1"/>
    <property type="gene ID" value="ENSG00000183304.10"/>
</dbReference>
<dbReference type="GeneID" id="171482"/>
<dbReference type="KEGG" id="hsa:171482"/>
<dbReference type="MANE-Select" id="ENST00000381003.7">
    <property type="protein sequence ID" value="ENSP00000370391.3"/>
    <property type="RefSeq nucleotide sequence ID" value="NM_174951.3"/>
    <property type="RefSeq protein sequence ID" value="NP_777611.1"/>
</dbReference>
<dbReference type="UCSC" id="uc004csg.4">
    <property type="organism name" value="human"/>
</dbReference>
<dbReference type="AGR" id="HGNC:18403"/>
<dbReference type="CTD" id="171482"/>
<dbReference type="DisGeNET" id="171482"/>
<dbReference type="GeneCards" id="FAM9A"/>
<dbReference type="HGNC" id="HGNC:18403">
    <property type="gene designation" value="FAM9A"/>
</dbReference>
<dbReference type="HPA" id="ENSG00000183304">
    <property type="expression patterns" value="Tissue enriched (testis)"/>
</dbReference>
<dbReference type="MIM" id="300477">
    <property type="type" value="gene"/>
</dbReference>
<dbReference type="neXtProt" id="NX_Q8IZU1"/>
<dbReference type="OpenTargets" id="ENSG00000183304"/>
<dbReference type="PharmGKB" id="PA27992"/>
<dbReference type="VEuPathDB" id="HostDB:ENSG00000183304"/>
<dbReference type="eggNOG" id="ENOG502TEZS">
    <property type="taxonomic scope" value="Eukaryota"/>
</dbReference>
<dbReference type="GeneTree" id="ENSGT00390000000062"/>
<dbReference type="HOGENOM" id="CLU_083208_0_0_1"/>
<dbReference type="InParanoid" id="Q8IZU1"/>
<dbReference type="OMA" id="EKQKRCQ"/>
<dbReference type="OrthoDB" id="9539293at2759"/>
<dbReference type="PAN-GO" id="Q8IZU1">
    <property type="GO annotations" value="3 GO annotations based on evolutionary models"/>
</dbReference>
<dbReference type="PhylomeDB" id="Q8IZU1"/>
<dbReference type="PathwayCommons" id="Q8IZU1"/>
<dbReference type="SignaLink" id="Q8IZU1"/>
<dbReference type="BioGRID-ORCS" id="171482">
    <property type="hits" value="16 hits in 769 CRISPR screens"/>
</dbReference>
<dbReference type="CD-CODE" id="91857CE7">
    <property type="entry name" value="Nucleolus"/>
</dbReference>
<dbReference type="GenomeRNAi" id="171482"/>
<dbReference type="Pharos" id="Q8IZU1">
    <property type="development level" value="Tdark"/>
</dbReference>
<dbReference type="PRO" id="PR:Q8IZU1"/>
<dbReference type="Proteomes" id="UP000005640">
    <property type="component" value="Chromosome X"/>
</dbReference>
<dbReference type="RNAct" id="Q8IZU1">
    <property type="molecule type" value="protein"/>
</dbReference>
<dbReference type="Bgee" id="ENSG00000183304">
    <property type="expression patterns" value="Expressed in male germ line stem cell (sensu Vertebrata) in testis and 12 other cell types or tissues"/>
</dbReference>
<dbReference type="GO" id="GO:0005730">
    <property type="term" value="C:nucleolus"/>
    <property type="evidence" value="ECO:0007669"/>
    <property type="project" value="UniProtKB-SubCell"/>
</dbReference>
<dbReference type="GO" id="GO:0000795">
    <property type="term" value="C:synaptonemal complex"/>
    <property type="evidence" value="ECO:0000318"/>
    <property type="project" value="GO_Central"/>
</dbReference>
<dbReference type="GO" id="GO:0051321">
    <property type="term" value="P:meiotic cell cycle"/>
    <property type="evidence" value="ECO:0000318"/>
    <property type="project" value="GO_Central"/>
</dbReference>
<dbReference type="GO" id="GO:0007286">
    <property type="term" value="P:spermatid development"/>
    <property type="evidence" value="ECO:0000318"/>
    <property type="project" value="GO_Central"/>
</dbReference>
<dbReference type="InterPro" id="IPR051443">
    <property type="entry name" value="XLR/SYCP3"/>
</dbReference>
<dbReference type="PANTHER" id="PTHR19368:SF16">
    <property type="entry name" value="PROTEIN FAM9A"/>
    <property type="match status" value="1"/>
</dbReference>
<dbReference type="PANTHER" id="PTHR19368">
    <property type="entry name" value="XLR/SCP3/FAM9"/>
    <property type="match status" value="1"/>
</dbReference>
<sequence length="332" mass="37339">MEPVGRKRSRKAAKAQLEAQVTAAQGATKEGSGIASNFPGQPTMEPVGRKRSRKAAKAQLEAQVRAAPAKKHTGKDPVRDECEERNPFTETREEDVTDEHGEREPFAEKDEHTGIHTMKLEHIAADIKKGLAAKREMIKIDKAAYRKTKNTIERALKKKQLKRQKRDYRHTRKLLNVLKEYIAEKQKDDEAEEAEAAAAAAEAAAAAEAAAAAAEVIVVEDEEEEEKEEEEEKEEEEEEGEEEGGGEEGEEGGGGGEGEETEEEEEEEEEEEEEEQIKAFQEKQKRWQQPTGVRSWRLREMKPLLEQLLKAAKDTKDNYCIISSSEESELDN</sequence>
<proteinExistence type="evidence at protein level"/>
<protein>
    <recommendedName>
        <fullName>Protein FAM9A</fullName>
    </recommendedName>
</protein>
<name>FAM9A_HUMAN</name>
<feature type="chain" id="PRO_0000119032" description="Protein FAM9A">
    <location>
        <begin position="1"/>
        <end position="332"/>
    </location>
</feature>
<feature type="region of interest" description="Disordered" evidence="1">
    <location>
        <begin position="1"/>
        <end position="114"/>
    </location>
</feature>
<feature type="region of interest" description="Disordered" evidence="1">
    <location>
        <begin position="186"/>
        <end position="293"/>
    </location>
</feature>
<feature type="compositionally biased region" description="Basic residues" evidence="1">
    <location>
        <begin position="1"/>
        <end position="13"/>
    </location>
</feature>
<feature type="compositionally biased region" description="Basic and acidic residues" evidence="1">
    <location>
        <begin position="74"/>
        <end position="91"/>
    </location>
</feature>
<feature type="compositionally biased region" description="Basic and acidic residues" evidence="1">
    <location>
        <begin position="98"/>
        <end position="114"/>
    </location>
</feature>
<feature type="compositionally biased region" description="Low complexity" evidence="1">
    <location>
        <begin position="196"/>
        <end position="217"/>
    </location>
</feature>
<feature type="compositionally biased region" description="Acidic residues" evidence="1">
    <location>
        <begin position="218"/>
        <end position="275"/>
    </location>
</feature>
<feature type="compositionally biased region" description="Basic and acidic residues" evidence="1">
    <location>
        <begin position="276"/>
        <end position="285"/>
    </location>
</feature>
<evidence type="ECO:0000256" key="1">
    <source>
        <dbReference type="SAM" id="MobiDB-lite"/>
    </source>
</evidence>
<evidence type="ECO:0000269" key="2">
    <source>
    </source>
</evidence>
<evidence type="ECO:0000305" key="3"/>
<evidence type="ECO:0000312" key="4">
    <source>
        <dbReference type="HGNC" id="HGNC:18403"/>
    </source>
</evidence>
<organism>
    <name type="scientific">Homo sapiens</name>
    <name type="common">Human</name>
    <dbReference type="NCBI Taxonomy" id="9606"/>
    <lineage>
        <taxon>Eukaryota</taxon>
        <taxon>Metazoa</taxon>
        <taxon>Chordata</taxon>
        <taxon>Craniata</taxon>
        <taxon>Vertebrata</taxon>
        <taxon>Euteleostomi</taxon>
        <taxon>Mammalia</taxon>
        <taxon>Eutheria</taxon>
        <taxon>Euarchontoglires</taxon>
        <taxon>Primates</taxon>
        <taxon>Haplorrhini</taxon>
        <taxon>Catarrhini</taxon>
        <taxon>Hominidae</taxon>
        <taxon>Homo</taxon>
    </lineage>
</organism>